<feature type="chain" id="PRO_0000071502" description="Protein phosphatase 1 regulatory subunit 3A">
    <location>
        <begin position="1"/>
        <end position="1109"/>
    </location>
</feature>
<feature type="transmembrane region" description="Helical" evidence="3">
    <location>
        <begin position="1066"/>
        <end position="1086"/>
    </location>
</feature>
<feature type="domain" description="CBM21" evidence="4">
    <location>
        <begin position="124"/>
        <end position="232"/>
    </location>
</feature>
<feature type="region of interest" description="Disordered" evidence="5">
    <location>
        <begin position="236"/>
        <end position="278"/>
    </location>
</feature>
<feature type="region of interest" description="Disordered" evidence="5">
    <location>
        <begin position="340"/>
        <end position="424"/>
    </location>
</feature>
<feature type="region of interest" description="Disordered" evidence="5">
    <location>
        <begin position="436"/>
        <end position="455"/>
    </location>
</feature>
<feature type="region of interest" description="Disordered" evidence="5">
    <location>
        <begin position="493"/>
        <end position="517"/>
    </location>
</feature>
<feature type="region of interest" description="Disordered" evidence="5">
    <location>
        <begin position="945"/>
        <end position="985"/>
    </location>
</feature>
<feature type="region of interest" description="Disordered" evidence="5">
    <location>
        <begin position="1011"/>
        <end position="1048"/>
    </location>
</feature>
<feature type="short sequence motif" description="PP1-binding motif">
    <location>
        <begin position="64"/>
        <end position="67"/>
    </location>
</feature>
<feature type="compositionally biased region" description="Basic and acidic residues" evidence="5">
    <location>
        <begin position="236"/>
        <end position="251"/>
    </location>
</feature>
<feature type="compositionally biased region" description="Polar residues" evidence="5">
    <location>
        <begin position="340"/>
        <end position="352"/>
    </location>
</feature>
<feature type="compositionally biased region" description="Polar residues" evidence="5">
    <location>
        <begin position="360"/>
        <end position="384"/>
    </location>
</feature>
<feature type="compositionally biased region" description="Polar residues" evidence="5">
    <location>
        <begin position="396"/>
        <end position="406"/>
    </location>
</feature>
<feature type="compositionally biased region" description="Polar residues" evidence="5">
    <location>
        <begin position="951"/>
        <end position="963"/>
    </location>
</feature>
<feature type="compositionally biased region" description="Basic and acidic residues" evidence="5">
    <location>
        <begin position="966"/>
        <end position="985"/>
    </location>
</feature>
<feature type="compositionally biased region" description="Basic and acidic residues" evidence="5">
    <location>
        <begin position="1011"/>
        <end position="1034"/>
    </location>
</feature>
<feature type="compositionally biased region" description="Polar residues" evidence="5">
    <location>
        <begin position="1035"/>
        <end position="1048"/>
    </location>
</feature>
<feature type="modified residue" description="Phosphoserine; by GSK3" evidence="8">
    <location>
        <position position="40"/>
    </location>
</feature>
<feature type="modified residue" description="Phosphoserine; by GSK3" evidence="8">
    <location>
        <position position="44"/>
    </location>
</feature>
<feature type="modified residue" description="Phosphoserine; by PKA and ISPK" evidence="7 8">
    <location>
        <position position="48"/>
    </location>
</feature>
<feature type="modified residue" description="Phosphoserine" evidence="2">
    <location>
        <position position="51"/>
    </location>
</feature>
<feature type="modified residue" description="Phosphothreonine" evidence="2">
    <location>
        <position position="58"/>
    </location>
</feature>
<feature type="modified residue" description="Phosphoserine; by PKA" evidence="8">
    <location>
        <position position="67"/>
    </location>
</feature>
<feature type="modified residue" description="Phosphoserine" evidence="2">
    <location>
        <position position="843"/>
    </location>
</feature>
<feature type="sequence variant" evidence="6">
    <original>T</original>
    <variation>M</variation>
    <location>
        <position position="311"/>
    </location>
</feature>
<feature type="sequence variant" evidence="6">
    <original>N</original>
    <variation>K</variation>
    <location>
        <position position="413"/>
    </location>
</feature>
<feature type="sequence conflict" description="In Ref. 1; AA sequence." evidence="9" ref="1">
    <original>C</original>
    <variation>Y</variation>
    <location>
        <position position="26"/>
    </location>
</feature>
<feature type="sequence conflict" description="In Ref. 1; AA sequence." evidence="9" ref="1">
    <original>C</original>
    <variation>S</variation>
    <location>
        <position position="183"/>
    </location>
</feature>
<feature type="helix" evidence="11">
    <location>
        <begin position="69"/>
        <end position="72"/>
    </location>
</feature>
<feature type="strand" evidence="11">
    <location>
        <begin position="76"/>
        <end position="82"/>
    </location>
</feature>
<feature type="strand" evidence="10">
    <location>
        <begin position="104"/>
        <end position="106"/>
    </location>
</feature>
<feature type="strand" evidence="10">
    <location>
        <begin position="108"/>
        <end position="110"/>
    </location>
</feature>
<feature type="helix" evidence="10">
    <location>
        <begin position="118"/>
        <end position="125"/>
    </location>
</feature>
<feature type="strand" evidence="10">
    <location>
        <begin position="130"/>
        <end position="137"/>
    </location>
</feature>
<feature type="strand" evidence="10">
    <location>
        <begin position="144"/>
        <end position="151"/>
    </location>
</feature>
<feature type="strand" evidence="10">
    <location>
        <begin position="155"/>
        <end position="169"/>
    </location>
</feature>
<feature type="strand" evidence="10">
    <location>
        <begin position="185"/>
        <end position="193"/>
    </location>
</feature>
<feature type="turn" evidence="10">
    <location>
        <begin position="198"/>
        <end position="200"/>
    </location>
</feature>
<feature type="strand" evidence="10">
    <location>
        <begin position="207"/>
        <end position="215"/>
    </location>
</feature>
<feature type="strand" evidence="10">
    <location>
        <begin position="218"/>
        <end position="222"/>
    </location>
</feature>
<feature type="strand" evidence="10">
    <location>
        <begin position="231"/>
        <end position="235"/>
    </location>
</feature>
<dbReference type="EMBL" id="M65109">
    <property type="protein sequence ID" value="AAA31462.1"/>
    <property type="molecule type" value="mRNA"/>
</dbReference>
<dbReference type="PIR" id="A40801">
    <property type="entry name" value="A40801"/>
</dbReference>
<dbReference type="RefSeq" id="NP_001075772.1">
    <property type="nucleotide sequence ID" value="NM_001082303.1"/>
</dbReference>
<dbReference type="PDB" id="2M83">
    <property type="method" value="NMR"/>
    <property type="chains" value="A=102-237"/>
</dbReference>
<dbReference type="PDB" id="6DNO">
    <property type="method" value="X-ray"/>
    <property type="resolution" value="1.45 A"/>
    <property type="chains" value="B=64-93"/>
</dbReference>
<dbReference type="PDBsum" id="2M83"/>
<dbReference type="PDBsum" id="6DNO"/>
<dbReference type="BMRB" id="Q00756"/>
<dbReference type="SMR" id="Q00756"/>
<dbReference type="BioGRID" id="1172163">
    <property type="interactions" value="3"/>
</dbReference>
<dbReference type="FunCoup" id="Q00756">
    <property type="interactions" value="19"/>
</dbReference>
<dbReference type="IntAct" id="Q00756">
    <property type="interactions" value="2"/>
</dbReference>
<dbReference type="MINT" id="Q00756"/>
<dbReference type="STRING" id="9986.ENSOCUP00000000266"/>
<dbReference type="CAZy" id="CBM21">
    <property type="family name" value="Carbohydrate-Binding Module Family 21"/>
</dbReference>
<dbReference type="iPTMnet" id="Q00756"/>
<dbReference type="PaxDb" id="9986-ENSOCUP00000000266"/>
<dbReference type="Ensembl" id="ENSOCUT00000000303.2">
    <property type="protein sequence ID" value="ENSOCUP00000000266.2"/>
    <property type="gene ID" value="ENSOCUG00000000303.3"/>
</dbReference>
<dbReference type="GeneID" id="100009140"/>
<dbReference type="KEGG" id="ocu:100009140"/>
<dbReference type="CTD" id="5506"/>
<dbReference type="eggNOG" id="KOG3986">
    <property type="taxonomic scope" value="Eukaryota"/>
</dbReference>
<dbReference type="GeneTree" id="ENSGT00940000157682"/>
<dbReference type="HOGENOM" id="CLU_009399_0_0_1"/>
<dbReference type="InParanoid" id="Q00756"/>
<dbReference type="OMA" id="DCWELPS"/>
<dbReference type="OrthoDB" id="1881at2759"/>
<dbReference type="TreeFam" id="TF105537"/>
<dbReference type="EvolutionaryTrace" id="Q00756"/>
<dbReference type="Proteomes" id="UP000001811">
    <property type="component" value="Chromosome 7"/>
</dbReference>
<dbReference type="Bgee" id="ENSOCUG00000000303">
    <property type="expression patterns" value="Expressed in skeletal muscle tissue and 8 other cell types or tissues"/>
</dbReference>
<dbReference type="GO" id="GO:0016020">
    <property type="term" value="C:membrane"/>
    <property type="evidence" value="ECO:0007669"/>
    <property type="project" value="UniProtKB-SubCell"/>
</dbReference>
<dbReference type="GO" id="GO:0000164">
    <property type="term" value="C:protein phosphatase type 1 complex"/>
    <property type="evidence" value="ECO:0000314"/>
    <property type="project" value="CAFA"/>
</dbReference>
<dbReference type="GO" id="GO:2001069">
    <property type="term" value="F:glycogen binding"/>
    <property type="evidence" value="ECO:0007669"/>
    <property type="project" value="TreeGrafter"/>
</dbReference>
<dbReference type="GO" id="GO:0008157">
    <property type="term" value="F:protein phosphatase 1 binding"/>
    <property type="evidence" value="ECO:0007669"/>
    <property type="project" value="TreeGrafter"/>
</dbReference>
<dbReference type="GO" id="GO:0005977">
    <property type="term" value="P:glycogen metabolic process"/>
    <property type="evidence" value="ECO:0007669"/>
    <property type="project" value="UniProtKB-KW"/>
</dbReference>
<dbReference type="GO" id="GO:0005979">
    <property type="term" value="P:regulation of glycogen biosynthetic process"/>
    <property type="evidence" value="ECO:0007669"/>
    <property type="project" value="TreeGrafter"/>
</dbReference>
<dbReference type="CDD" id="cd22255">
    <property type="entry name" value="PBD_PPP1R3A"/>
    <property type="match status" value="1"/>
</dbReference>
<dbReference type="FunFam" id="2.60.40.2440:FF:000004">
    <property type="entry name" value="protein phosphatase 1 regulatory subunit 3A"/>
    <property type="match status" value="1"/>
</dbReference>
<dbReference type="Gene3D" id="2.60.40.2440">
    <property type="entry name" value="Carbohydrate binding type-21 domain"/>
    <property type="match status" value="1"/>
</dbReference>
<dbReference type="InterPro" id="IPR005036">
    <property type="entry name" value="CBM21_dom"/>
</dbReference>
<dbReference type="InterPro" id="IPR038175">
    <property type="entry name" value="CBM21_dom_sf"/>
</dbReference>
<dbReference type="InterPro" id="IPR050782">
    <property type="entry name" value="PP1_regulatory_subunit_3"/>
</dbReference>
<dbReference type="PANTHER" id="PTHR12307">
    <property type="entry name" value="PROTEIN PHOSPHATASE 1 REGULATORY SUBUNIT"/>
    <property type="match status" value="1"/>
</dbReference>
<dbReference type="PANTHER" id="PTHR12307:SF2">
    <property type="entry name" value="PROTEIN PHOSPHATASE 1 REGULATORY SUBUNIT 3A"/>
    <property type="match status" value="1"/>
</dbReference>
<dbReference type="Pfam" id="PF03370">
    <property type="entry name" value="CBM_21"/>
    <property type="match status" value="1"/>
</dbReference>
<dbReference type="PROSITE" id="PS51159">
    <property type="entry name" value="CBM21"/>
    <property type="match status" value="1"/>
</dbReference>
<evidence type="ECO:0000250" key="1"/>
<evidence type="ECO:0000250" key="2">
    <source>
        <dbReference type="UniProtKB" id="Q99MR9"/>
    </source>
</evidence>
<evidence type="ECO:0000255" key="3"/>
<evidence type="ECO:0000255" key="4">
    <source>
        <dbReference type="PROSITE-ProRule" id="PRU00491"/>
    </source>
</evidence>
<evidence type="ECO:0000256" key="5">
    <source>
        <dbReference type="SAM" id="MobiDB-lite"/>
    </source>
</evidence>
<evidence type="ECO:0000269" key="6">
    <source>
    </source>
</evidence>
<evidence type="ECO:0000269" key="7">
    <source>
    </source>
</evidence>
<evidence type="ECO:0000269" key="8">
    <source>
    </source>
</evidence>
<evidence type="ECO:0000305" key="9"/>
<evidence type="ECO:0007829" key="10">
    <source>
        <dbReference type="PDB" id="2M83"/>
    </source>
</evidence>
<evidence type="ECO:0007829" key="11">
    <source>
        <dbReference type="PDB" id="6DNO"/>
    </source>
</evidence>
<keyword id="KW-0002">3D-structure</keyword>
<keyword id="KW-0119">Carbohydrate metabolism</keyword>
<keyword id="KW-0903">Direct protein sequencing</keyword>
<keyword id="KW-0321">Glycogen metabolism</keyword>
<keyword id="KW-0472">Membrane</keyword>
<keyword id="KW-0597">Phosphoprotein</keyword>
<keyword id="KW-1185">Reference proteome</keyword>
<keyword id="KW-0812">Transmembrane</keyword>
<keyword id="KW-1133">Transmembrane helix</keyword>
<reference key="1">
    <citation type="journal article" date="1991" name="J. Biol. Chem.">
        <title>Molecular cloning and expression of the regulatory (RG1) subunit of the glycogen-associated protein phosphatase.</title>
        <authorList>
            <person name="Tang P.M."/>
            <person name="Bondor J.A."/>
            <person name="Swiderek K.M."/>
            <person name="DePaoli-Roach A.A."/>
        </authorList>
    </citation>
    <scope>NUCLEOTIDE SEQUENCE [MRNA]</scope>
    <scope>PROTEIN SEQUENCE OF 13-52; 59-68; 75-118; 163-193; 540-561; 565-580 AND 625-632</scope>
    <scope>TISSUE SPECIFICITY</scope>
    <scope>VARIANTS MET-311 AND LYS-413</scope>
    <source>
        <strain>New Zealand</strain>
        <tissue>Skeletal muscle</tissue>
    </source>
</reference>
<reference key="2">
    <citation type="journal article" date="1989" name="FEBS Lett.">
        <title>Multisite phosphorylation of the glycogen-binding subunit of protein phosphatase-1G by cyclic AMP-dependent protein kinase and glycogen synthase kinase-3.</title>
        <authorList>
            <person name="Dent P."/>
            <person name="Campbell D.G."/>
            <person name="Hubbard M.J."/>
            <person name="Cohen P."/>
        </authorList>
    </citation>
    <scope>PROTEIN SEQUENCE OF 33-46</scope>
    <scope>PHOSPHORYLATION AT SER-40; SER-44; SER-48 AND SER-67</scope>
</reference>
<reference key="3">
    <citation type="journal article" date="1990" name="Nature">
        <title>The molecular mechanism by which insulin stimulates glycogen synthesis in mammalian skeletal muscle.</title>
        <authorList>
            <person name="Dent P."/>
            <person name="Lavoinne A."/>
            <person name="Nakielny S."/>
            <person name="Caudwell F.B."/>
            <person name="Watt P."/>
            <person name="Cohen P."/>
        </authorList>
    </citation>
    <scope>PHOSPHORYLATION AT SER-48</scope>
</reference>
<sequence length="1109" mass="124170">MEPSEVPGQNSKDNFLEVPNLSDSLCEDEEVKAIFKPGFSPQPSRRGSESSEEVYVHTASSGGRRVSFADNFGFNLVSVKEFDTWELPSVSTTFELGKDAFQTEEYVLSPLFDLPASKEDLMQQLQVQKAMLESTEYVPGSTSMKGIIRVLNISFEKLVYVRMSLDDWQTHYDILAEYVPNSCDGETDQFSFKISLVPPYQKDGSKVEFCIRYETSVGTFWSNNNGTNYTLVCQKKEPEPEPGKPLEEAPSKQKKGCLKVKSSKEESSETSEENNFENSKIADTYIPTIVCSHEEKEDLKSSYQNVKDVNTEHDEHNEKELELMINQRLIRTRCAASEYGKNTLSSDPSNIPNKPEELQKNQSHSEACTDLSQRLLSPGSSAESSLKGDFYHTEKYSSGNESSHQPSDMGEINPSLGGTTSDGSVQLHISSKEILDDNANPAHGSGRGEISCSFPGQLKASNLNKKYEGGAENSEMKDCECLPRDVHLKASDYFKKSTENRPSEEDYGTSKDNKEKRIQLDVDEKTSKNFRSIFYDQERNVGHLEITVEGIEASDRDLTSLPTKDTTIPTWAIMEDTFHSSRTPLGREEAVLTTPEHDLSSSEGTILGGLTGGVCSPRNGNVLKNDYLFQVEKRKSGWINPEDQNKDTQHQQSWNVLESQEKARGSKTNIAEQIKEQVDCEDMWEKRDNTGSLKATPAEALFTCQEAEHCELSPLADHGIPGKAEAGTAYIIKTTSETTPESMSAGEKAIIAKLPQETARSDRPMEVKETAFDPHEGRNDDSHYTLCQRDTVGVIDDNGVEKESHLDICNARLDEMRKEEAMSMHSPGKMRDREKLGIGNITSVEESSQVIANNEKATSRLDLHLEMPSADKKIFPENRDLGQVQELSKKTDIDNTVHSAFNSDTNRASRDDSLLSSHHTETSVLSCEQANAVKNTVTTTALQTSATESEYNCSPTRETQGQPASKPEEVSRGSRRVTSETRKEKCVGQMFQSGECNVEMSQGPMILVSESRENVERERHENEGLINSGDKEFESSASSSLPVQETQDQSNESLLSKYTNSKIPYFLLFLMFLVTVYHYDLMIGLAFYLFSLYWLYWEEGRQKESVKKK</sequence>
<comment type="function">
    <text evidence="1">Seems to act as a glycogen-targeting subunit for PP1. PP1 is essential for cell division, and participates in the regulation of glycogen metabolism, muscle contractility and protein synthesis. Plays an important role in glycogen synthesis but is not essential for insulin activation of glycogen synthase (By similarity).</text>
</comment>
<comment type="subunit">
    <text evidence="1">Interacts with PPP1CC catalytic subunit of PP1, and associates with glycogen.</text>
</comment>
<comment type="subcellular location">
    <subcellularLocation>
        <location evidence="9">Membrane</location>
        <topology evidence="9">Single-pass membrane protein</topology>
    </subcellularLocation>
</comment>
<comment type="tissue specificity">
    <text evidence="6">Skeletal muscle, diaphragm and cardiac muscle.</text>
</comment>
<comment type="domain">
    <text>The CBM21 domain is known to be involved in the localization to glycogen and is characteristic of some regulatory subunit of phosphatase complexes.</text>
</comment>
<comment type="PTM">
    <text evidence="7 8">Phosphorylation at Ser-48 by ISPK stimulates the dephosphorylation of glycogen synthase and phosphorylase kinase.</text>
</comment>
<gene>
    <name type="primary">PPP1R3A</name>
    <name type="synonym">PP1G</name>
</gene>
<protein>
    <recommendedName>
        <fullName>Protein phosphatase 1 regulatory subunit 3A</fullName>
    </recommendedName>
    <alternativeName>
        <fullName>Protein phosphatase 1 glycogen-associated regulatory subunit</fullName>
    </alternativeName>
    <alternativeName>
        <fullName>Protein phosphatase type-1 glycogen targeting subunit</fullName>
        <shortName>RG1</shortName>
    </alternativeName>
</protein>
<proteinExistence type="evidence at protein level"/>
<name>PPR3A_RABIT</name>
<accession>Q00756</accession>
<organism>
    <name type="scientific">Oryctolagus cuniculus</name>
    <name type="common">Rabbit</name>
    <dbReference type="NCBI Taxonomy" id="9986"/>
    <lineage>
        <taxon>Eukaryota</taxon>
        <taxon>Metazoa</taxon>
        <taxon>Chordata</taxon>
        <taxon>Craniata</taxon>
        <taxon>Vertebrata</taxon>
        <taxon>Euteleostomi</taxon>
        <taxon>Mammalia</taxon>
        <taxon>Eutheria</taxon>
        <taxon>Euarchontoglires</taxon>
        <taxon>Glires</taxon>
        <taxon>Lagomorpha</taxon>
        <taxon>Leporidae</taxon>
        <taxon>Oryctolagus</taxon>
    </lineage>
</organism>